<feature type="chain" id="PRO_1000122168" description="Integration host factor subunit alpha">
    <location>
        <begin position="1"/>
        <end position="97"/>
    </location>
</feature>
<feature type="region of interest" description="Disordered" evidence="2">
    <location>
        <begin position="49"/>
        <end position="71"/>
    </location>
</feature>
<proteinExistence type="inferred from homology"/>
<evidence type="ECO:0000255" key="1">
    <source>
        <dbReference type="HAMAP-Rule" id="MF_00380"/>
    </source>
</evidence>
<evidence type="ECO:0000256" key="2">
    <source>
        <dbReference type="SAM" id="MobiDB-lite"/>
    </source>
</evidence>
<sequence length="97" mass="10989">MALTKAEMAEHLFETLGINKRVAKEMVEAFFEEIRQALESGEQVKLSGFGNFDLRDKNQRPGRNPKTGEDIPISARRVVTFRPGQKLKSRVEEANAK</sequence>
<dbReference type="EMBL" id="CP000961">
    <property type="protein sequence ID" value="ACA86352.1"/>
    <property type="molecule type" value="Genomic_DNA"/>
</dbReference>
<dbReference type="RefSeq" id="WP_012324697.1">
    <property type="nucleotide sequence ID" value="NC_010506.1"/>
</dbReference>
<dbReference type="SMR" id="B1KRE5"/>
<dbReference type="STRING" id="392500.Swoo_2068"/>
<dbReference type="KEGG" id="swd:Swoo_2068"/>
<dbReference type="eggNOG" id="COG0776">
    <property type="taxonomic scope" value="Bacteria"/>
</dbReference>
<dbReference type="HOGENOM" id="CLU_105066_1_3_6"/>
<dbReference type="Proteomes" id="UP000002168">
    <property type="component" value="Chromosome"/>
</dbReference>
<dbReference type="GO" id="GO:0005829">
    <property type="term" value="C:cytosol"/>
    <property type="evidence" value="ECO:0007669"/>
    <property type="project" value="TreeGrafter"/>
</dbReference>
<dbReference type="GO" id="GO:0003677">
    <property type="term" value="F:DNA binding"/>
    <property type="evidence" value="ECO:0007669"/>
    <property type="project" value="UniProtKB-UniRule"/>
</dbReference>
<dbReference type="GO" id="GO:0030527">
    <property type="term" value="F:structural constituent of chromatin"/>
    <property type="evidence" value="ECO:0007669"/>
    <property type="project" value="InterPro"/>
</dbReference>
<dbReference type="GO" id="GO:0006310">
    <property type="term" value="P:DNA recombination"/>
    <property type="evidence" value="ECO:0007669"/>
    <property type="project" value="UniProtKB-UniRule"/>
</dbReference>
<dbReference type="GO" id="GO:0009893">
    <property type="term" value="P:positive regulation of metabolic process"/>
    <property type="evidence" value="ECO:0007669"/>
    <property type="project" value="UniProtKB-ARBA"/>
</dbReference>
<dbReference type="GO" id="GO:0006355">
    <property type="term" value="P:regulation of DNA-templated transcription"/>
    <property type="evidence" value="ECO:0007669"/>
    <property type="project" value="UniProtKB-UniRule"/>
</dbReference>
<dbReference type="GO" id="GO:0006417">
    <property type="term" value="P:regulation of translation"/>
    <property type="evidence" value="ECO:0007669"/>
    <property type="project" value="UniProtKB-UniRule"/>
</dbReference>
<dbReference type="CDD" id="cd13835">
    <property type="entry name" value="IHF_A"/>
    <property type="match status" value="1"/>
</dbReference>
<dbReference type="FunFam" id="4.10.520.10:FF:000002">
    <property type="entry name" value="Integration host factor subunit alpha"/>
    <property type="match status" value="1"/>
</dbReference>
<dbReference type="Gene3D" id="4.10.520.10">
    <property type="entry name" value="IHF-like DNA-binding proteins"/>
    <property type="match status" value="1"/>
</dbReference>
<dbReference type="HAMAP" id="MF_00380">
    <property type="entry name" value="IHF_alpha"/>
    <property type="match status" value="1"/>
</dbReference>
<dbReference type="InterPro" id="IPR000119">
    <property type="entry name" value="Hist_DNA-bd"/>
</dbReference>
<dbReference type="InterPro" id="IPR020816">
    <property type="entry name" value="Histone-like_DNA-bd_CS"/>
</dbReference>
<dbReference type="InterPro" id="IPR010992">
    <property type="entry name" value="IHF-like_DNA-bd_dom_sf"/>
</dbReference>
<dbReference type="InterPro" id="IPR005684">
    <property type="entry name" value="IHF_alpha"/>
</dbReference>
<dbReference type="NCBIfam" id="TIGR00987">
    <property type="entry name" value="himA"/>
    <property type="match status" value="1"/>
</dbReference>
<dbReference type="NCBIfam" id="NF001401">
    <property type="entry name" value="PRK00285.1"/>
    <property type="match status" value="1"/>
</dbReference>
<dbReference type="PANTHER" id="PTHR33175">
    <property type="entry name" value="DNA-BINDING PROTEIN HU"/>
    <property type="match status" value="1"/>
</dbReference>
<dbReference type="PANTHER" id="PTHR33175:SF2">
    <property type="entry name" value="INTEGRATION HOST FACTOR SUBUNIT ALPHA"/>
    <property type="match status" value="1"/>
</dbReference>
<dbReference type="Pfam" id="PF00216">
    <property type="entry name" value="Bac_DNA_binding"/>
    <property type="match status" value="1"/>
</dbReference>
<dbReference type="PRINTS" id="PR01727">
    <property type="entry name" value="DNABINDINGHU"/>
</dbReference>
<dbReference type="SMART" id="SM00411">
    <property type="entry name" value="BHL"/>
    <property type="match status" value="1"/>
</dbReference>
<dbReference type="SUPFAM" id="SSF47729">
    <property type="entry name" value="IHF-like DNA-binding proteins"/>
    <property type="match status" value="1"/>
</dbReference>
<dbReference type="PROSITE" id="PS00045">
    <property type="entry name" value="HISTONE_LIKE"/>
    <property type="match status" value="1"/>
</dbReference>
<accession>B1KRE5</accession>
<keyword id="KW-0233">DNA recombination</keyword>
<keyword id="KW-0238">DNA-binding</keyword>
<keyword id="KW-1185">Reference proteome</keyword>
<keyword id="KW-0804">Transcription</keyword>
<keyword id="KW-0805">Transcription regulation</keyword>
<keyword id="KW-0810">Translation regulation</keyword>
<reference key="1">
    <citation type="submission" date="2008-02" db="EMBL/GenBank/DDBJ databases">
        <title>Complete sequence of Shewanella woodyi ATCC 51908.</title>
        <authorList>
            <consortium name="US DOE Joint Genome Institute"/>
            <person name="Copeland A."/>
            <person name="Lucas S."/>
            <person name="Lapidus A."/>
            <person name="Glavina del Rio T."/>
            <person name="Dalin E."/>
            <person name="Tice H."/>
            <person name="Bruce D."/>
            <person name="Goodwin L."/>
            <person name="Pitluck S."/>
            <person name="Sims D."/>
            <person name="Brettin T."/>
            <person name="Detter J.C."/>
            <person name="Han C."/>
            <person name="Kuske C.R."/>
            <person name="Schmutz J."/>
            <person name="Larimer F."/>
            <person name="Land M."/>
            <person name="Hauser L."/>
            <person name="Kyrpides N."/>
            <person name="Lykidis A."/>
            <person name="Zhao J.-S."/>
            <person name="Richardson P."/>
        </authorList>
    </citation>
    <scope>NUCLEOTIDE SEQUENCE [LARGE SCALE GENOMIC DNA]</scope>
    <source>
        <strain>ATCC 51908 / MS32</strain>
    </source>
</reference>
<name>IHFA_SHEWM</name>
<organism>
    <name type="scientific">Shewanella woodyi (strain ATCC 51908 / MS32)</name>
    <dbReference type="NCBI Taxonomy" id="392500"/>
    <lineage>
        <taxon>Bacteria</taxon>
        <taxon>Pseudomonadati</taxon>
        <taxon>Pseudomonadota</taxon>
        <taxon>Gammaproteobacteria</taxon>
        <taxon>Alteromonadales</taxon>
        <taxon>Shewanellaceae</taxon>
        <taxon>Shewanella</taxon>
    </lineage>
</organism>
<comment type="function">
    <text evidence="1">This protein is one of the two subunits of integration host factor, a specific DNA-binding protein that functions in genetic recombination as well as in transcriptional and translational control.</text>
</comment>
<comment type="subunit">
    <text evidence="1">Heterodimer of an alpha and a beta chain.</text>
</comment>
<comment type="similarity">
    <text evidence="1">Belongs to the bacterial histone-like protein family.</text>
</comment>
<protein>
    <recommendedName>
        <fullName evidence="1">Integration host factor subunit alpha</fullName>
        <shortName evidence="1">IHF-alpha</shortName>
    </recommendedName>
</protein>
<gene>
    <name evidence="1" type="primary">ihfA</name>
    <name evidence="1" type="synonym">himA</name>
    <name type="ordered locus">Swoo_2068</name>
</gene>